<keyword id="KW-0028">Amino-acid biosynthesis</keyword>
<keyword id="KW-0057">Aromatic amino acid biosynthesis</keyword>
<keyword id="KW-0521">NADP</keyword>
<keyword id="KW-0560">Oxidoreductase</keyword>
<sequence>MKQLYGVIGNPIGHSLSPVMHNDAFEHLNMDAHYHAFLVKEEVLGEAVRGLKALGISGFNVTTPHKVAIMDYLDEIDPLAKQIGAVNTVVHKDGKLIGYNTDGIGFVRALQSISSKPLQEKRILLLGAGGASRAIYFSLADVGVKEIDVANRTVDKAKELITACKATVHSVALSLEKATEEQGNYDIIIQTTTIGMHPRVEHTPLQISSLNKGTIVSDIIYNPFETKILCEAKEQGAMIQNGIDMFVYQGALAFEMWTGRTPNIERMKQLVIRKLGG</sequence>
<feature type="chain" id="PRO_1000021259" description="Shikimate dehydrogenase (NADP(+))">
    <location>
        <begin position="1"/>
        <end position="277"/>
    </location>
</feature>
<feature type="active site" description="Proton acceptor" evidence="1">
    <location>
        <position position="66"/>
    </location>
</feature>
<feature type="binding site" evidence="1">
    <location>
        <begin position="15"/>
        <end position="17"/>
    </location>
    <ligand>
        <name>shikimate</name>
        <dbReference type="ChEBI" id="CHEBI:36208"/>
    </ligand>
</feature>
<feature type="binding site" evidence="1">
    <location>
        <position position="62"/>
    </location>
    <ligand>
        <name>shikimate</name>
        <dbReference type="ChEBI" id="CHEBI:36208"/>
    </ligand>
</feature>
<feature type="binding site" evidence="1">
    <location>
        <position position="87"/>
    </location>
    <ligand>
        <name>shikimate</name>
        <dbReference type="ChEBI" id="CHEBI:36208"/>
    </ligand>
</feature>
<feature type="binding site" evidence="1">
    <location>
        <position position="102"/>
    </location>
    <ligand>
        <name>shikimate</name>
        <dbReference type="ChEBI" id="CHEBI:36208"/>
    </ligand>
</feature>
<feature type="binding site" evidence="1">
    <location>
        <begin position="127"/>
        <end position="131"/>
    </location>
    <ligand>
        <name>NADP(+)</name>
        <dbReference type="ChEBI" id="CHEBI:58349"/>
    </ligand>
</feature>
<feature type="binding site" evidence="1">
    <location>
        <begin position="151"/>
        <end position="156"/>
    </location>
    <ligand>
        <name>NADP(+)</name>
        <dbReference type="ChEBI" id="CHEBI:58349"/>
    </ligand>
</feature>
<feature type="binding site" evidence="1">
    <location>
        <position position="219"/>
    </location>
    <ligand>
        <name>NADP(+)</name>
        <dbReference type="ChEBI" id="CHEBI:58349"/>
    </ligand>
</feature>
<feature type="binding site" evidence="1">
    <location>
        <position position="221"/>
    </location>
    <ligand>
        <name>shikimate</name>
        <dbReference type="ChEBI" id="CHEBI:36208"/>
    </ligand>
</feature>
<feature type="binding site" evidence="1">
    <location>
        <position position="242"/>
    </location>
    <ligand>
        <name>NADP(+)</name>
        <dbReference type="ChEBI" id="CHEBI:58349"/>
    </ligand>
</feature>
<accession>Q730K1</accession>
<dbReference type="EC" id="1.1.1.25" evidence="1"/>
<dbReference type="EMBL" id="AE017194">
    <property type="protein sequence ID" value="AAS43316.1"/>
    <property type="molecule type" value="Genomic_DNA"/>
</dbReference>
<dbReference type="SMR" id="Q730K1"/>
<dbReference type="KEGG" id="bca:BCE_4415"/>
<dbReference type="HOGENOM" id="CLU_044063_4_1_9"/>
<dbReference type="UniPathway" id="UPA00053">
    <property type="reaction ID" value="UER00087"/>
</dbReference>
<dbReference type="Proteomes" id="UP000002527">
    <property type="component" value="Chromosome"/>
</dbReference>
<dbReference type="GO" id="GO:0005829">
    <property type="term" value="C:cytosol"/>
    <property type="evidence" value="ECO:0007669"/>
    <property type="project" value="TreeGrafter"/>
</dbReference>
<dbReference type="GO" id="GO:0050661">
    <property type="term" value="F:NADP binding"/>
    <property type="evidence" value="ECO:0007669"/>
    <property type="project" value="InterPro"/>
</dbReference>
<dbReference type="GO" id="GO:0004764">
    <property type="term" value="F:shikimate 3-dehydrogenase (NADP+) activity"/>
    <property type="evidence" value="ECO:0007669"/>
    <property type="project" value="UniProtKB-UniRule"/>
</dbReference>
<dbReference type="GO" id="GO:0008652">
    <property type="term" value="P:amino acid biosynthetic process"/>
    <property type="evidence" value="ECO:0007669"/>
    <property type="project" value="UniProtKB-KW"/>
</dbReference>
<dbReference type="GO" id="GO:0009073">
    <property type="term" value="P:aromatic amino acid family biosynthetic process"/>
    <property type="evidence" value="ECO:0007669"/>
    <property type="project" value="UniProtKB-KW"/>
</dbReference>
<dbReference type="GO" id="GO:0009423">
    <property type="term" value="P:chorismate biosynthetic process"/>
    <property type="evidence" value="ECO:0007669"/>
    <property type="project" value="UniProtKB-UniRule"/>
</dbReference>
<dbReference type="GO" id="GO:0019632">
    <property type="term" value="P:shikimate metabolic process"/>
    <property type="evidence" value="ECO:0007669"/>
    <property type="project" value="InterPro"/>
</dbReference>
<dbReference type="CDD" id="cd01065">
    <property type="entry name" value="NAD_bind_Shikimate_DH"/>
    <property type="match status" value="1"/>
</dbReference>
<dbReference type="FunFam" id="3.40.50.10860:FF:000011">
    <property type="entry name" value="Shikimate dehydrogenase (NADP(+))"/>
    <property type="match status" value="1"/>
</dbReference>
<dbReference type="Gene3D" id="3.40.50.10860">
    <property type="entry name" value="Leucine Dehydrogenase, chain A, domain 1"/>
    <property type="match status" value="1"/>
</dbReference>
<dbReference type="Gene3D" id="3.40.50.720">
    <property type="entry name" value="NAD(P)-binding Rossmann-like Domain"/>
    <property type="match status" value="1"/>
</dbReference>
<dbReference type="HAMAP" id="MF_00222">
    <property type="entry name" value="Shikimate_DH_AroE"/>
    <property type="match status" value="1"/>
</dbReference>
<dbReference type="InterPro" id="IPR046346">
    <property type="entry name" value="Aminoacid_DH-like_N_sf"/>
</dbReference>
<dbReference type="InterPro" id="IPR036291">
    <property type="entry name" value="NAD(P)-bd_dom_sf"/>
</dbReference>
<dbReference type="InterPro" id="IPR041121">
    <property type="entry name" value="SDH_C"/>
</dbReference>
<dbReference type="InterPro" id="IPR011342">
    <property type="entry name" value="Shikimate_DH"/>
</dbReference>
<dbReference type="InterPro" id="IPR013708">
    <property type="entry name" value="Shikimate_DH-bd_N"/>
</dbReference>
<dbReference type="InterPro" id="IPR022893">
    <property type="entry name" value="Shikimate_DH_fam"/>
</dbReference>
<dbReference type="InterPro" id="IPR006151">
    <property type="entry name" value="Shikm_DH/Glu-tRNA_Rdtase"/>
</dbReference>
<dbReference type="NCBIfam" id="TIGR00507">
    <property type="entry name" value="aroE"/>
    <property type="match status" value="1"/>
</dbReference>
<dbReference type="NCBIfam" id="NF001319">
    <property type="entry name" value="PRK00258.3-3"/>
    <property type="match status" value="1"/>
</dbReference>
<dbReference type="PANTHER" id="PTHR21089:SF1">
    <property type="entry name" value="BIFUNCTIONAL 3-DEHYDROQUINATE DEHYDRATASE_SHIKIMATE DEHYDROGENASE, CHLOROPLASTIC"/>
    <property type="match status" value="1"/>
</dbReference>
<dbReference type="PANTHER" id="PTHR21089">
    <property type="entry name" value="SHIKIMATE DEHYDROGENASE"/>
    <property type="match status" value="1"/>
</dbReference>
<dbReference type="Pfam" id="PF18317">
    <property type="entry name" value="SDH_C"/>
    <property type="match status" value="1"/>
</dbReference>
<dbReference type="Pfam" id="PF01488">
    <property type="entry name" value="Shikimate_DH"/>
    <property type="match status" value="1"/>
</dbReference>
<dbReference type="Pfam" id="PF08501">
    <property type="entry name" value="Shikimate_dh_N"/>
    <property type="match status" value="1"/>
</dbReference>
<dbReference type="SUPFAM" id="SSF53223">
    <property type="entry name" value="Aminoacid dehydrogenase-like, N-terminal domain"/>
    <property type="match status" value="1"/>
</dbReference>
<dbReference type="SUPFAM" id="SSF51735">
    <property type="entry name" value="NAD(P)-binding Rossmann-fold domains"/>
    <property type="match status" value="1"/>
</dbReference>
<name>AROE_BACC1</name>
<comment type="function">
    <text evidence="1">Involved in the biosynthesis of the chorismate, which leads to the biosynthesis of aromatic amino acids. Catalyzes the reversible NADPH linked reduction of 3-dehydroshikimate (DHSA) to yield shikimate (SA).</text>
</comment>
<comment type="catalytic activity">
    <reaction evidence="1">
        <text>shikimate + NADP(+) = 3-dehydroshikimate + NADPH + H(+)</text>
        <dbReference type="Rhea" id="RHEA:17737"/>
        <dbReference type="ChEBI" id="CHEBI:15378"/>
        <dbReference type="ChEBI" id="CHEBI:16630"/>
        <dbReference type="ChEBI" id="CHEBI:36208"/>
        <dbReference type="ChEBI" id="CHEBI:57783"/>
        <dbReference type="ChEBI" id="CHEBI:58349"/>
        <dbReference type="EC" id="1.1.1.25"/>
    </reaction>
</comment>
<comment type="pathway">
    <text evidence="1">Metabolic intermediate biosynthesis; chorismate biosynthesis; chorismate from D-erythrose 4-phosphate and phosphoenolpyruvate: step 4/7.</text>
</comment>
<comment type="subunit">
    <text evidence="1">Homodimer.</text>
</comment>
<comment type="similarity">
    <text evidence="1">Belongs to the shikimate dehydrogenase family.</text>
</comment>
<organism>
    <name type="scientific">Bacillus cereus (strain ATCC 10987 / NRS 248)</name>
    <dbReference type="NCBI Taxonomy" id="222523"/>
    <lineage>
        <taxon>Bacteria</taxon>
        <taxon>Bacillati</taxon>
        <taxon>Bacillota</taxon>
        <taxon>Bacilli</taxon>
        <taxon>Bacillales</taxon>
        <taxon>Bacillaceae</taxon>
        <taxon>Bacillus</taxon>
        <taxon>Bacillus cereus group</taxon>
    </lineage>
</organism>
<proteinExistence type="inferred from homology"/>
<protein>
    <recommendedName>
        <fullName evidence="1">Shikimate dehydrogenase (NADP(+))</fullName>
        <shortName evidence="1">SDH</shortName>
        <ecNumber evidence="1">1.1.1.25</ecNumber>
    </recommendedName>
</protein>
<reference key="1">
    <citation type="journal article" date="2004" name="Nucleic Acids Res.">
        <title>The genome sequence of Bacillus cereus ATCC 10987 reveals metabolic adaptations and a large plasmid related to Bacillus anthracis pXO1.</title>
        <authorList>
            <person name="Rasko D.A."/>
            <person name="Ravel J."/>
            <person name="Oekstad O.A."/>
            <person name="Helgason E."/>
            <person name="Cer R.Z."/>
            <person name="Jiang L."/>
            <person name="Shores K.A."/>
            <person name="Fouts D.E."/>
            <person name="Tourasse N.J."/>
            <person name="Angiuoli S.V."/>
            <person name="Kolonay J.F."/>
            <person name="Nelson W.C."/>
            <person name="Kolstoe A.-B."/>
            <person name="Fraser C.M."/>
            <person name="Read T.D."/>
        </authorList>
    </citation>
    <scope>NUCLEOTIDE SEQUENCE [LARGE SCALE GENOMIC DNA]</scope>
    <source>
        <strain>ATCC 10987 / NRS 248</strain>
    </source>
</reference>
<gene>
    <name evidence="1" type="primary">aroE</name>
    <name type="ordered locus">BCE_4415</name>
</gene>
<evidence type="ECO:0000255" key="1">
    <source>
        <dbReference type="HAMAP-Rule" id="MF_00222"/>
    </source>
</evidence>